<feature type="chain" id="PRO_1000115542" description="Trigger factor">
    <location>
        <begin position="1"/>
        <end position="451"/>
    </location>
</feature>
<feature type="domain" description="PPIase FKBP-type" evidence="1">
    <location>
        <begin position="165"/>
        <end position="250"/>
    </location>
</feature>
<accession>B2UT36</accession>
<sequence>MNLEVKKIDTANARLSAKLSVENLEKRYDKIAQKIAPKVKIDGFRRGKVPLSLVKTRYQAQIEQDAQEEMIQEVLKNALKELGIENKDLIGSPNFTKFEKKDTHFEIEADIGLKPTIVLDKIKECVPSVGVEIPNEEKIDERLKQLAKDYAKFVDTDAQRKAQNDDKLTIDFEGFIDNAPFEGGKAENFSLILGSKQMLEDFEKALLGMQAGEEKEFPLTFPSQYHAEHLAGKEALFKVKLRQIQAREALEINDELAKIVLANEENATLKLLKERVEGQLFLENKARLYNEELKEKLIENLDEKIVFDLPKTIIEQEMDLLFRNALYSMQAEGVKSLQESQEKAKEKRESFRNDATKSVKITFIIDALAKEEKIGVHDNEVFQTLYYEAMMTGQNPENLIEQYRKNNMLAAVKMAMIEDRVLTYLLDKNLPKEQQEILEKMRPNAQKTQVG</sequence>
<protein>
    <recommendedName>
        <fullName evidence="1">Trigger factor</fullName>
        <shortName evidence="1">TF</shortName>
        <ecNumber evidence="1">5.2.1.8</ecNumber>
    </recommendedName>
    <alternativeName>
        <fullName evidence="1">PPIase</fullName>
    </alternativeName>
</protein>
<gene>
    <name evidence="1" type="primary">tig</name>
    <name type="ordered locus">HPSH_02840</name>
</gene>
<name>TIG_HELPS</name>
<evidence type="ECO:0000255" key="1">
    <source>
        <dbReference type="HAMAP-Rule" id="MF_00303"/>
    </source>
</evidence>
<reference key="1">
    <citation type="submission" date="2008-05" db="EMBL/GenBank/DDBJ databases">
        <title>Genome sequence of Helicobacter pylori from the remote Amazon: traces of Asian ancestry of the first Americans.</title>
        <authorList>
            <person name="Kersulyte D."/>
            <person name="Kalia A."/>
            <person name="Gilman R.H."/>
            <person name="Berg D.E."/>
        </authorList>
    </citation>
    <scope>NUCLEOTIDE SEQUENCE [LARGE SCALE GENOMIC DNA]</scope>
    <source>
        <strain>Shi470</strain>
    </source>
</reference>
<dbReference type="EC" id="5.2.1.8" evidence="1"/>
<dbReference type="EMBL" id="CP001072">
    <property type="protein sequence ID" value="ACD48018.1"/>
    <property type="molecule type" value="Genomic_DNA"/>
</dbReference>
<dbReference type="RefSeq" id="WP_001047742.1">
    <property type="nucleotide sequence ID" value="NC_010698.2"/>
</dbReference>
<dbReference type="SMR" id="B2UT36"/>
<dbReference type="KEGG" id="hps:HPSH_02840"/>
<dbReference type="HOGENOM" id="CLU_033058_2_2_7"/>
<dbReference type="GO" id="GO:0005737">
    <property type="term" value="C:cytoplasm"/>
    <property type="evidence" value="ECO:0007669"/>
    <property type="project" value="UniProtKB-SubCell"/>
</dbReference>
<dbReference type="GO" id="GO:0003755">
    <property type="term" value="F:peptidyl-prolyl cis-trans isomerase activity"/>
    <property type="evidence" value="ECO:0007669"/>
    <property type="project" value="UniProtKB-UniRule"/>
</dbReference>
<dbReference type="GO" id="GO:0044183">
    <property type="term" value="F:protein folding chaperone"/>
    <property type="evidence" value="ECO:0007669"/>
    <property type="project" value="TreeGrafter"/>
</dbReference>
<dbReference type="GO" id="GO:0043022">
    <property type="term" value="F:ribosome binding"/>
    <property type="evidence" value="ECO:0007669"/>
    <property type="project" value="TreeGrafter"/>
</dbReference>
<dbReference type="GO" id="GO:0051083">
    <property type="term" value="P:'de novo' cotranslational protein folding"/>
    <property type="evidence" value="ECO:0007669"/>
    <property type="project" value="TreeGrafter"/>
</dbReference>
<dbReference type="GO" id="GO:0051301">
    <property type="term" value="P:cell division"/>
    <property type="evidence" value="ECO:0007669"/>
    <property type="project" value="UniProtKB-KW"/>
</dbReference>
<dbReference type="GO" id="GO:0061077">
    <property type="term" value="P:chaperone-mediated protein folding"/>
    <property type="evidence" value="ECO:0007669"/>
    <property type="project" value="TreeGrafter"/>
</dbReference>
<dbReference type="GO" id="GO:0015031">
    <property type="term" value="P:protein transport"/>
    <property type="evidence" value="ECO:0007669"/>
    <property type="project" value="UniProtKB-UniRule"/>
</dbReference>
<dbReference type="GO" id="GO:0043335">
    <property type="term" value="P:protein unfolding"/>
    <property type="evidence" value="ECO:0007669"/>
    <property type="project" value="TreeGrafter"/>
</dbReference>
<dbReference type="FunFam" id="3.10.50.40:FF:000001">
    <property type="entry name" value="Trigger factor"/>
    <property type="match status" value="1"/>
</dbReference>
<dbReference type="Gene3D" id="3.10.50.40">
    <property type="match status" value="1"/>
</dbReference>
<dbReference type="Gene3D" id="3.30.70.1050">
    <property type="entry name" value="Trigger factor ribosome-binding domain"/>
    <property type="match status" value="1"/>
</dbReference>
<dbReference type="Gene3D" id="1.10.3120.10">
    <property type="entry name" value="Trigger factor, C-terminal domain"/>
    <property type="match status" value="1"/>
</dbReference>
<dbReference type="HAMAP" id="MF_00303">
    <property type="entry name" value="Trigger_factor_Tig"/>
    <property type="match status" value="1"/>
</dbReference>
<dbReference type="InterPro" id="IPR046357">
    <property type="entry name" value="PPIase_dom_sf"/>
</dbReference>
<dbReference type="InterPro" id="IPR001179">
    <property type="entry name" value="PPIase_FKBP_dom"/>
</dbReference>
<dbReference type="InterPro" id="IPR005215">
    <property type="entry name" value="Trig_fac"/>
</dbReference>
<dbReference type="InterPro" id="IPR008880">
    <property type="entry name" value="Trigger_fac_C"/>
</dbReference>
<dbReference type="InterPro" id="IPR037041">
    <property type="entry name" value="Trigger_fac_C_sf"/>
</dbReference>
<dbReference type="InterPro" id="IPR008881">
    <property type="entry name" value="Trigger_fac_ribosome-bd_bac"/>
</dbReference>
<dbReference type="InterPro" id="IPR036611">
    <property type="entry name" value="Trigger_fac_ribosome-bd_sf"/>
</dbReference>
<dbReference type="InterPro" id="IPR027304">
    <property type="entry name" value="Trigger_fact/SurA_dom_sf"/>
</dbReference>
<dbReference type="NCBIfam" id="TIGR00115">
    <property type="entry name" value="tig"/>
    <property type="match status" value="1"/>
</dbReference>
<dbReference type="PANTHER" id="PTHR30560">
    <property type="entry name" value="TRIGGER FACTOR CHAPERONE AND PEPTIDYL-PROLYL CIS/TRANS ISOMERASE"/>
    <property type="match status" value="1"/>
</dbReference>
<dbReference type="PANTHER" id="PTHR30560:SF3">
    <property type="entry name" value="TRIGGER FACTOR-LIKE PROTEIN TIG, CHLOROPLASTIC"/>
    <property type="match status" value="1"/>
</dbReference>
<dbReference type="Pfam" id="PF00254">
    <property type="entry name" value="FKBP_C"/>
    <property type="match status" value="1"/>
</dbReference>
<dbReference type="Pfam" id="PF05698">
    <property type="entry name" value="Trigger_C"/>
    <property type="match status" value="1"/>
</dbReference>
<dbReference type="Pfam" id="PF05697">
    <property type="entry name" value="Trigger_N"/>
    <property type="match status" value="1"/>
</dbReference>
<dbReference type="PIRSF" id="PIRSF003095">
    <property type="entry name" value="Trigger_factor"/>
    <property type="match status" value="1"/>
</dbReference>
<dbReference type="SUPFAM" id="SSF54534">
    <property type="entry name" value="FKBP-like"/>
    <property type="match status" value="1"/>
</dbReference>
<dbReference type="SUPFAM" id="SSF109998">
    <property type="entry name" value="Triger factor/SurA peptide-binding domain-like"/>
    <property type="match status" value="1"/>
</dbReference>
<dbReference type="SUPFAM" id="SSF102735">
    <property type="entry name" value="Trigger factor ribosome-binding domain"/>
    <property type="match status" value="1"/>
</dbReference>
<dbReference type="PROSITE" id="PS50059">
    <property type="entry name" value="FKBP_PPIASE"/>
    <property type="match status" value="1"/>
</dbReference>
<proteinExistence type="inferred from homology"/>
<comment type="function">
    <text evidence="1">Involved in protein export. Acts as a chaperone by maintaining the newly synthesized protein in an open conformation. Functions as a peptidyl-prolyl cis-trans isomerase.</text>
</comment>
<comment type="catalytic activity">
    <reaction evidence="1">
        <text>[protein]-peptidylproline (omega=180) = [protein]-peptidylproline (omega=0)</text>
        <dbReference type="Rhea" id="RHEA:16237"/>
        <dbReference type="Rhea" id="RHEA-COMP:10747"/>
        <dbReference type="Rhea" id="RHEA-COMP:10748"/>
        <dbReference type="ChEBI" id="CHEBI:83833"/>
        <dbReference type="ChEBI" id="CHEBI:83834"/>
        <dbReference type="EC" id="5.2.1.8"/>
    </reaction>
</comment>
<comment type="subcellular location">
    <subcellularLocation>
        <location>Cytoplasm</location>
    </subcellularLocation>
    <text evidence="1">About half TF is bound to the ribosome near the polypeptide exit tunnel while the other half is free in the cytoplasm.</text>
</comment>
<comment type="domain">
    <text evidence="1">Consists of 3 domains; the N-terminus binds the ribosome, the middle domain has PPIase activity, while the C-terminus has intrinsic chaperone activity on its own.</text>
</comment>
<comment type="similarity">
    <text evidence="1">Belongs to the FKBP-type PPIase family. Tig subfamily.</text>
</comment>
<keyword id="KW-0131">Cell cycle</keyword>
<keyword id="KW-0132">Cell division</keyword>
<keyword id="KW-0143">Chaperone</keyword>
<keyword id="KW-0963">Cytoplasm</keyword>
<keyword id="KW-0413">Isomerase</keyword>
<keyword id="KW-0697">Rotamase</keyword>
<organism>
    <name type="scientific">Helicobacter pylori (strain Shi470)</name>
    <dbReference type="NCBI Taxonomy" id="512562"/>
    <lineage>
        <taxon>Bacteria</taxon>
        <taxon>Pseudomonadati</taxon>
        <taxon>Campylobacterota</taxon>
        <taxon>Epsilonproteobacteria</taxon>
        <taxon>Campylobacterales</taxon>
        <taxon>Helicobacteraceae</taxon>
        <taxon>Helicobacter</taxon>
    </lineage>
</organism>